<organism>
    <name type="scientific">Chromobacterium violaceum (strain ATCC 12472 / DSM 30191 / JCM 1249 / CCUG 213 / NBRC 12614 / NCIMB 9131 / NCTC 9757 / MK)</name>
    <dbReference type="NCBI Taxonomy" id="243365"/>
    <lineage>
        <taxon>Bacteria</taxon>
        <taxon>Pseudomonadati</taxon>
        <taxon>Pseudomonadota</taxon>
        <taxon>Betaproteobacteria</taxon>
        <taxon>Neisseriales</taxon>
        <taxon>Chromobacteriaceae</taxon>
        <taxon>Chromobacterium</taxon>
    </lineage>
</organism>
<sequence length="364" mass="41027">MAMPRYLTEPAFRHDYAPKTGVLLINLGTPDAPTAQALRPYLKQFLSDPRVIEIPRLPWWLILNGIILNTRPKQSAKKYASIWTKEGSPLLLHTRSQAKLLKGQLGEMGLHNLAVDYAMRYGNPSIESVIGKMREQGVERLLLLPLYPQYAASSSATALDEAFRVLSRLRNMPEVRTVRHFHDDPGYIAALAAQIRKHWQYGQRPDKLVMSFHGVPRFTRDKGDPYHCECQKTGRLLAEALQLRPDQYVISFQSRFGRTEWLKPYTSEVLEALGKAKTARVDVVCPGFVGDCLETLEEIAMEGKETFLSHGGGEFRYIPCLNEDPQWISSLAGIVRNNLAGWTEIRAEDSQQRAALAHDMGASA</sequence>
<feature type="chain" id="PRO_0000175131" description="Ferrochelatase">
    <location>
        <begin position="1"/>
        <end position="364"/>
    </location>
</feature>
<feature type="binding site" evidence="1">
    <location>
        <position position="213"/>
    </location>
    <ligand>
        <name>Fe cation</name>
        <dbReference type="ChEBI" id="CHEBI:24875"/>
    </ligand>
</feature>
<feature type="binding site" evidence="1">
    <location>
        <position position="294"/>
    </location>
    <ligand>
        <name>Fe cation</name>
        <dbReference type="ChEBI" id="CHEBI:24875"/>
    </ligand>
</feature>
<gene>
    <name evidence="1" type="primary">hemH</name>
    <name type="ordered locus">CV_2480</name>
</gene>
<comment type="function">
    <text evidence="1">Catalyzes the ferrous insertion into protoporphyrin IX.</text>
</comment>
<comment type="catalytic activity">
    <reaction evidence="1">
        <text>heme b + 2 H(+) = protoporphyrin IX + Fe(2+)</text>
        <dbReference type="Rhea" id="RHEA:22584"/>
        <dbReference type="ChEBI" id="CHEBI:15378"/>
        <dbReference type="ChEBI" id="CHEBI:29033"/>
        <dbReference type="ChEBI" id="CHEBI:57306"/>
        <dbReference type="ChEBI" id="CHEBI:60344"/>
        <dbReference type="EC" id="4.98.1.1"/>
    </reaction>
</comment>
<comment type="pathway">
    <text evidence="1">Porphyrin-containing compound metabolism; protoheme biosynthesis; protoheme from protoporphyrin-IX: step 1/1.</text>
</comment>
<comment type="subcellular location">
    <subcellularLocation>
        <location evidence="1">Cytoplasm</location>
    </subcellularLocation>
</comment>
<comment type="similarity">
    <text evidence="1">Belongs to the ferrochelatase family.</text>
</comment>
<name>HEMH_CHRVO</name>
<proteinExistence type="inferred from homology"/>
<dbReference type="EC" id="4.98.1.1" evidence="1"/>
<dbReference type="EMBL" id="AE016825">
    <property type="protein sequence ID" value="AAQ60151.2"/>
    <property type="molecule type" value="Genomic_DNA"/>
</dbReference>
<dbReference type="SMR" id="Q7NV65"/>
<dbReference type="STRING" id="243365.CV_2480"/>
<dbReference type="KEGG" id="cvi:CV_2480"/>
<dbReference type="eggNOG" id="COG0276">
    <property type="taxonomic scope" value="Bacteria"/>
</dbReference>
<dbReference type="HOGENOM" id="CLU_018884_0_0_4"/>
<dbReference type="UniPathway" id="UPA00252">
    <property type="reaction ID" value="UER00325"/>
</dbReference>
<dbReference type="Proteomes" id="UP000001424">
    <property type="component" value="Chromosome"/>
</dbReference>
<dbReference type="GO" id="GO:0005737">
    <property type="term" value="C:cytoplasm"/>
    <property type="evidence" value="ECO:0007669"/>
    <property type="project" value="UniProtKB-SubCell"/>
</dbReference>
<dbReference type="GO" id="GO:0004325">
    <property type="term" value="F:ferrochelatase activity"/>
    <property type="evidence" value="ECO:0007669"/>
    <property type="project" value="UniProtKB-UniRule"/>
</dbReference>
<dbReference type="GO" id="GO:0046872">
    <property type="term" value="F:metal ion binding"/>
    <property type="evidence" value="ECO:0007669"/>
    <property type="project" value="UniProtKB-KW"/>
</dbReference>
<dbReference type="GO" id="GO:0006783">
    <property type="term" value="P:heme biosynthetic process"/>
    <property type="evidence" value="ECO:0007669"/>
    <property type="project" value="UniProtKB-UniRule"/>
</dbReference>
<dbReference type="CDD" id="cd00419">
    <property type="entry name" value="Ferrochelatase_C"/>
    <property type="match status" value="1"/>
</dbReference>
<dbReference type="CDD" id="cd03411">
    <property type="entry name" value="Ferrochelatase_N"/>
    <property type="match status" value="1"/>
</dbReference>
<dbReference type="FunFam" id="3.40.50.1400:FF:000002">
    <property type="entry name" value="Ferrochelatase"/>
    <property type="match status" value="1"/>
</dbReference>
<dbReference type="Gene3D" id="3.40.50.1400">
    <property type="match status" value="2"/>
</dbReference>
<dbReference type="HAMAP" id="MF_00323">
    <property type="entry name" value="Ferrochelatase"/>
    <property type="match status" value="1"/>
</dbReference>
<dbReference type="InterPro" id="IPR001015">
    <property type="entry name" value="Ferrochelatase"/>
</dbReference>
<dbReference type="InterPro" id="IPR019772">
    <property type="entry name" value="Ferrochelatase_AS"/>
</dbReference>
<dbReference type="InterPro" id="IPR033644">
    <property type="entry name" value="Ferrochelatase_C"/>
</dbReference>
<dbReference type="InterPro" id="IPR033659">
    <property type="entry name" value="Ferrochelatase_N"/>
</dbReference>
<dbReference type="NCBIfam" id="TIGR00109">
    <property type="entry name" value="hemH"/>
    <property type="match status" value="1"/>
</dbReference>
<dbReference type="PANTHER" id="PTHR11108">
    <property type="entry name" value="FERROCHELATASE"/>
    <property type="match status" value="1"/>
</dbReference>
<dbReference type="PANTHER" id="PTHR11108:SF1">
    <property type="entry name" value="FERROCHELATASE, MITOCHONDRIAL"/>
    <property type="match status" value="1"/>
</dbReference>
<dbReference type="Pfam" id="PF00762">
    <property type="entry name" value="Ferrochelatase"/>
    <property type="match status" value="1"/>
</dbReference>
<dbReference type="SUPFAM" id="SSF53800">
    <property type="entry name" value="Chelatase"/>
    <property type="match status" value="1"/>
</dbReference>
<dbReference type="PROSITE" id="PS00534">
    <property type="entry name" value="FERROCHELATASE"/>
    <property type="match status" value="1"/>
</dbReference>
<keyword id="KW-0963">Cytoplasm</keyword>
<keyword id="KW-0350">Heme biosynthesis</keyword>
<keyword id="KW-0408">Iron</keyword>
<keyword id="KW-0456">Lyase</keyword>
<keyword id="KW-0479">Metal-binding</keyword>
<keyword id="KW-0627">Porphyrin biosynthesis</keyword>
<keyword id="KW-1185">Reference proteome</keyword>
<accession>Q7NV65</accession>
<evidence type="ECO:0000255" key="1">
    <source>
        <dbReference type="HAMAP-Rule" id="MF_00323"/>
    </source>
</evidence>
<protein>
    <recommendedName>
        <fullName evidence="1">Ferrochelatase</fullName>
        <ecNumber evidence="1">4.98.1.1</ecNumber>
    </recommendedName>
    <alternativeName>
        <fullName evidence="1">Heme synthase</fullName>
    </alternativeName>
    <alternativeName>
        <fullName evidence="1">Protoheme ferro-lyase</fullName>
    </alternativeName>
</protein>
<reference key="1">
    <citation type="journal article" date="2003" name="Proc. Natl. Acad. Sci. U.S.A.">
        <title>The complete genome sequence of Chromobacterium violaceum reveals remarkable and exploitable bacterial adaptability.</title>
        <authorList>
            <person name="Vasconcelos A.T.R."/>
            <person name="de Almeida D.F."/>
            <person name="Hungria M."/>
            <person name="Guimaraes C.T."/>
            <person name="Antonio R.V."/>
            <person name="Almeida F.C."/>
            <person name="de Almeida L.G.P."/>
            <person name="de Almeida R."/>
            <person name="Alves-Gomes J.A."/>
            <person name="Andrade E.M."/>
            <person name="Araripe J."/>
            <person name="de Araujo M.F.F."/>
            <person name="Astolfi-Filho S."/>
            <person name="Azevedo V."/>
            <person name="Baptista A.J."/>
            <person name="Bataus L.A.M."/>
            <person name="Batista J.S."/>
            <person name="Belo A."/>
            <person name="van den Berg C."/>
            <person name="Bogo M."/>
            <person name="Bonatto S."/>
            <person name="Bordignon J."/>
            <person name="Brigido M.M."/>
            <person name="Brito C.A."/>
            <person name="Brocchi M."/>
            <person name="Burity H.A."/>
            <person name="Camargo A.A."/>
            <person name="Cardoso D.D.P."/>
            <person name="Carneiro N.P."/>
            <person name="Carraro D.M."/>
            <person name="Carvalho C.M.B."/>
            <person name="Cascardo J.C.M."/>
            <person name="Cavada B.S."/>
            <person name="Chueire L.M.O."/>
            <person name="Creczynski-Pasa T.B."/>
            <person name="Cunha-Junior N.C."/>
            <person name="Fagundes N."/>
            <person name="Falcao C.L."/>
            <person name="Fantinatti F."/>
            <person name="Farias I.P."/>
            <person name="Felipe M.S.S."/>
            <person name="Ferrari L.P."/>
            <person name="Ferro J.A."/>
            <person name="Ferro M.I.T."/>
            <person name="Franco G.R."/>
            <person name="Freitas N.S.A."/>
            <person name="Furlan L.R."/>
            <person name="Gazzinelli R.T."/>
            <person name="Gomes E.A."/>
            <person name="Goncalves P.R."/>
            <person name="Grangeiro T.B."/>
            <person name="Grattapaglia D."/>
            <person name="Grisard E.C."/>
            <person name="Hanna E.S."/>
            <person name="Jardim S.N."/>
            <person name="Laurino J."/>
            <person name="Leoi L.C.T."/>
            <person name="Lima L.F.A."/>
            <person name="Loureiro M.F."/>
            <person name="Lyra M.C.C.P."/>
            <person name="Madeira H.M.F."/>
            <person name="Manfio G.P."/>
            <person name="Maranhao A.Q."/>
            <person name="Martins W.S."/>
            <person name="di Mauro S.M.Z."/>
            <person name="de Medeiros S.R.B."/>
            <person name="Meissner R.V."/>
            <person name="Moreira M.A.M."/>
            <person name="Nascimento F.F."/>
            <person name="Nicolas M.F."/>
            <person name="Oliveira J.G."/>
            <person name="Oliveira S.C."/>
            <person name="Paixao R.F.C."/>
            <person name="Parente J.A."/>
            <person name="Pedrosa F.O."/>
            <person name="Pena S.D.J."/>
            <person name="Pereira J.O."/>
            <person name="Pereira M."/>
            <person name="Pinto L.S.R.C."/>
            <person name="Pinto L.S."/>
            <person name="Porto J.I.R."/>
            <person name="Potrich D.P."/>
            <person name="Ramalho-Neto C.E."/>
            <person name="Reis A.M.M."/>
            <person name="Rigo L.U."/>
            <person name="Rondinelli E."/>
            <person name="Santos E.B.P."/>
            <person name="Santos F.R."/>
            <person name="Schneider M.P.C."/>
            <person name="Seuanez H.N."/>
            <person name="Silva A.M.R."/>
            <person name="da Silva A.L.C."/>
            <person name="Silva D.W."/>
            <person name="Silva R."/>
            <person name="Simoes I.C."/>
            <person name="Simon D."/>
            <person name="Soares C.M.A."/>
            <person name="Soares R.B.A."/>
            <person name="Souza E.M."/>
            <person name="Souza K.R.L."/>
            <person name="Souza R.C."/>
            <person name="Steffens M.B.R."/>
            <person name="Steindel M."/>
            <person name="Teixeira S.R."/>
            <person name="Urmenyi T."/>
            <person name="Vettore A."/>
            <person name="Wassem R."/>
            <person name="Zaha A."/>
            <person name="Simpson A.J.G."/>
        </authorList>
    </citation>
    <scope>NUCLEOTIDE SEQUENCE [LARGE SCALE GENOMIC DNA]</scope>
    <source>
        <strain>ATCC 12472 / DSM 30191 / JCM 1249 / CCUG 213 / NBRC 12614 / NCIMB 9131 / NCTC 9757 / MK</strain>
    </source>
</reference>